<gene>
    <name type="primary">OST2</name>
    <name type="ordered locus">YOR103C</name>
    <name type="ORF">YOR3211C</name>
</gene>
<name>OST2_YEAST</name>
<sequence>MAKAPKANTPKVTSTSSAVLTDFQETFKTSKRAYFAQIEKYPKLKLIDTFCFFLVLLGVIQCTFIILIRDNFPFNAFLAGFIICVGQFVLLMSLRLQLCNSFPGISKNRAFAEFIVASLILHFVCLHFIN</sequence>
<evidence type="ECO:0000269" key="1">
    <source>
    </source>
</evidence>
<evidence type="ECO:0000269" key="2">
    <source>
    </source>
</evidence>
<evidence type="ECO:0000269" key="3">
    <source>
    </source>
</evidence>
<evidence type="ECO:0000269" key="4">
    <source>
    </source>
</evidence>
<evidence type="ECO:0000269" key="5">
    <source>
    </source>
</evidence>
<evidence type="ECO:0000269" key="6">
    <source>
    </source>
</evidence>
<evidence type="ECO:0000269" key="7">
    <source>
    </source>
</evidence>
<evidence type="ECO:0000269" key="8">
    <source>
    </source>
</evidence>
<evidence type="ECO:0000269" key="9">
    <source>
    </source>
</evidence>
<evidence type="ECO:0000305" key="10"/>
<evidence type="ECO:0000305" key="11">
    <source>
    </source>
</evidence>
<evidence type="ECO:0000305" key="12">
    <source>
    </source>
</evidence>
<evidence type="ECO:0007829" key="13">
    <source>
        <dbReference type="PDB" id="7OCI"/>
    </source>
</evidence>
<evidence type="ECO:0007829" key="14">
    <source>
        <dbReference type="PDB" id="8AGE"/>
    </source>
</evidence>
<dbReference type="EMBL" id="U32307">
    <property type="protein sequence ID" value="AAC49086.1"/>
    <property type="molecule type" value="Genomic_DNA"/>
</dbReference>
<dbReference type="EMBL" id="X94335">
    <property type="protein sequence ID" value="CAA64024.1"/>
    <property type="status" value="ALT_INIT"/>
    <property type="molecule type" value="Genomic_DNA"/>
</dbReference>
<dbReference type="EMBL" id="Z75010">
    <property type="protein sequence ID" value="CAA99300.1"/>
    <property type="status" value="ALT_INIT"/>
    <property type="molecule type" value="Genomic_DNA"/>
</dbReference>
<dbReference type="EMBL" id="BK006948">
    <property type="protein sequence ID" value="DAA10879.1"/>
    <property type="molecule type" value="Genomic_DNA"/>
</dbReference>
<dbReference type="PIR" id="S61662">
    <property type="entry name" value="S61662"/>
</dbReference>
<dbReference type="RefSeq" id="NP_014746.2">
    <property type="nucleotide sequence ID" value="NM_001183522.1"/>
</dbReference>
<dbReference type="PDB" id="6C26">
    <property type="method" value="EM"/>
    <property type="resolution" value="3.50 A"/>
    <property type="chains" value="2=1-130"/>
</dbReference>
<dbReference type="PDB" id="6EZN">
    <property type="method" value="EM"/>
    <property type="resolution" value="3.30 A"/>
    <property type="chains" value="B=1-130"/>
</dbReference>
<dbReference type="PDB" id="7OCI">
    <property type="method" value="EM"/>
    <property type="resolution" value="3.46 A"/>
    <property type="chains" value="B=1-130"/>
</dbReference>
<dbReference type="PDB" id="8AGB">
    <property type="method" value="EM"/>
    <property type="resolution" value="3.00 A"/>
    <property type="chains" value="D=1-130"/>
</dbReference>
<dbReference type="PDB" id="8AGC">
    <property type="method" value="EM"/>
    <property type="resolution" value="3.10 A"/>
    <property type="chains" value="D=1-130"/>
</dbReference>
<dbReference type="PDB" id="8AGE">
    <property type="method" value="EM"/>
    <property type="resolution" value="2.80 A"/>
    <property type="chains" value="D=1-130"/>
</dbReference>
<dbReference type="PDBsum" id="6C26"/>
<dbReference type="PDBsum" id="6EZN"/>
<dbReference type="PDBsum" id="7OCI"/>
<dbReference type="PDBsum" id="8AGB"/>
<dbReference type="PDBsum" id="8AGC"/>
<dbReference type="PDBsum" id="8AGE"/>
<dbReference type="EMDB" id="EMD-12808"/>
<dbReference type="EMDB" id="EMD-15419"/>
<dbReference type="EMDB" id="EMD-4161"/>
<dbReference type="EMDB" id="EMD-7336"/>
<dbReference type="SMR" id="P46964"/>
<dbReference type="BioGRID" id="34500">
    <property type="interactions" value="382"/>
</dbReference>
<dbReference type="ComplexPortal" id="CPX-1638">
    <property type="entry name" value="Oligosaccharyltransferase complex, OST6 variant"/>
</dbReference>
<dbReference type="ComplexPortal" id="CPX-1639">
    <property type="entry name" value="Oligosaccharyltransferase complex, OST3 variant"/>
</dbReference>
<dbReference type="DIP" id="DIP-2455N"/>
<dbReference type="FunCoup" id="P46964">
    <property type="interactions" value="885"/>
</dbReference>
<dbReference type="IntAct" id="P46964">
    <property type="interactions" value="16"/>
</dbReference>
<dbReference type="MINT" id="P46964"/>
<dbReference type="STRING" id="4932.YOR103C"/>
<dbReference type="TCDB" id="9.B.142.3.14">
    <property type="family name" value="the integral membrane glycosyltransferase family 39 (gt39) family"/>
</dbReference>
<dbReference type="iPTMnet" id="P46964"/>
<dbReference type="PaxDb" id="4932-YOR103C"/>
<dbReference type="PeptideAtlas" id="P46964"/>
<dbReference type="EnsemblFungi" id="YOR103C_mRNA">
    <property type="protein sequence ID" value="YOR103C"/>
    <property type="gene ID" value="YOR103C"/>
</dbReference>
<dbReference type="GeneID" id="854270"/>
<dbReference type="KEGG" id="sce:YOR103C"/>
<dbReference type="AGR" id="SGD:S000005629"/>
<dbReference type="SGD" id="S000005629">
    <property type="gene designation" value="OST2"/>
</dbReference>
<dbReference type="VEuPathDB" id="FungiDB:YOR103C"/>
<dbReference type="eggNOG" id="KOG1746">
    <property type="taxonomic scope" value="Eukaryota"/>
</dbReference>
<dbReference type="GeneTree" id="ENSGT00390000003324"/>
<dbReference type="HOGENOM" id="CLU_111220_1_1_1"/>
<dbReference type="InParanoid" id="P46964"/>
<dbReference type="OMA" id="YCCSVGT"/>
<dbReference type="OrthoDB" id="445566at2759"/>
<dbReference type="BioCyc" id="MetaCyc:YOR103C-MONOMER"/>
<dbReference type="BioCyc" id="YEAST:YOR103C-MONOMER"/>
<dbReference type="BRENDA" id="2.4.99.18">
    <property type="organism ID" value="984"/>
</dbReference>
<dbReference type="UniPathway" id="UPA00378"/>
<dbReference type="BioGRID-ORCS" id="854270">
    <property type="hits" value="9 hits in 10 CRISPR screens"/>
</dbReference>
<dbReference type="PRO" id="PR:P46964"/>
<dbReference type="Proteomes" id="UP000002311">
    <property type="component" value="Chromosome XV"/>
</dbReference>
<dbReference type="RNAct" id="P46964">
    <property type="molecule type" value="protein"/>
</dbReference>
<dbReference type="GO" id="GO:0005783">
    <property type="term" value="C:endoplasmic reticulum"/>
    <property type="evidence" value="ECO:0007005"/>
    <property type="project" value="SGD"/>
</dbReference>
<dbReference type="GO" id="GO:0005789">
    <property type="term" value="C:endoplasmic reticulum membrane"/>
    <property type="evidence" value="ECO:0000303"/>
    <property type="project" value="ComplexPortal"/>
</dbReference>
<dbReference type="GO" id="GO:0008250">
    <property type="term" value="C:oligosaccharyltransferase complex"/>
    <property type="evidence" value="ECO:0000314"/>
    <property type="project" value="SGD"/>
</dbReference>
<dbReference type="GO" id="GO:0006487">
    <property type="term" value="P:protein N-linked glycosylation"/>
    <property type="evidence" value="ECO:0000315"/>
    <property type="project" value="SGD"/>
</dbReference>
<dbReference type="InterPro" id="IPR003038">
    <property type="entry name" value="DAD/Ost2"/>
</dbReference>
<dbReference type="PANTHER" id="PTHR10705">
    <property type="entry name" value="DOLICHYL-DIPHOSPHOOLIGOSACCHARIDE--PROTEIN GLYCOSYLTRANSFERASE SUBUNIT DAD1"/>
    <property type="match status" value="1"/>
</dbReference>
<dbReference type="PANTHER" id="PTHR10705:SF0">
    <property type="entry name" value="DOLICHYL-DIPHOSPHOOLIGOSACCHARIDE--PROTEIN GLYCOSYLTRANSFERASE SUBUNIT DAD1"/>
    <property type="match status" value="1"/>
</dbReference>
<dbReference type="Pfam" id="PF02109">
    <property type="entry name" value="DAD"/>
    <property type="match status" value="1"/>
</dbReference>
<dbReference type="PIRSF" id="PIRSF005588">
    <property type="entry name" value="DAD"/>
    <property type="match status" value="1"/>
</dbReference>
<organism>
    <name type="scientific">Saccharomyces cerevisiae (strain ATCC 204508 / S288c)</name>
    <name type="common">Baker's yeast</name>
    <dbReference type="NCBI Taxonomy" id="559292"/>
    <lineage>
        <taxon>Eukaryota</taxon>
        <taxon>Fungi</taxon>
        <taxon>Dikarya</taxon>
        <taxon>Ascomycota</taxon>
        <taxon>Saccharomycotina</taxon>
        <taxon>Saccharomycetes</taxon>
        <taxon>Saccharomycetales</taxon>
        <taxon>Saccharomycetaceae</taxon>
        <taxon>Saccharomyces</taxon>
    </lineage>
</organism>
<comment type="function">
    <text evidence="1">Subunit of the oligosaccharyl transferase (OST) complex that catalyzes the initial transfer of a defined glycan (Glc(3)Man(9)GlcNAc(2) in eukaryotes) from the lipid carrier dolichol-pyrophosphate to an asparagine residue within an Asn-X-Ser/Thr consensus motif in nascent polypeptide chains, the first step in protein N-glycosylation. N-glycosylation occurs cotranslationally and the complex associates with the Sec61 complex at the channel-forming translocon complex that mediates protein translocation across the endoplasmic reticulum (ER). All subunits are required for a maximal enzyme activity.</text>
</comment>
<comment type="pathway">
    <text evidence="12">Protein modification; protein glycosylation.</text>
</comment>
<comment type="subunit">
    <text evidence="2 3 4 5 6 8 9">Component of the oligosaccharyltransferase (OST) complex, which appears to exist in two assemblies comprising OST1, OST2, OST4, OST5, STT3, SWP1, WPB1, and either OST3 or OST6 (PubMed:15831493, PubMed:15886282, PubMed:16096345, PubMed:16297388, PubMed:29301962, PubMed:8175708, PubMed:9405463). OST assembly occurs through the formation of 3 subcomplexes. Subcomplex 1 contains OST1 and OST5, subcomplex 2 contains STT3, OST3, and OST4, and subcomplex 3 contains OST2, WBP1, and SWP1 (PubMed:29301962). Interacts with SEC61 and SSS1 (PubMed:15831493).</text>
</comment>
<comment type="interaction">
    <interactant intactId="EBI-12673">
        <id>P46964</id>
    </interactant>
    <interactant intactId="EBI-16410">
        <id>P52870</id>
        <label>SBH1</label>
    </interactant>
    <organismsDiffer>false</organismsDiffer>
    <experiments>2</experiments>
</comment>
<comment type="interaction">
    <interactant intactId="EBI-12673">
        <id>P46964</id>
    </interactant>
    <interactant intactId="EBI-16400">
        <id>P32915</id>
        <label>SEC61</label>
    </interactant>
    <organismsDiffer>false</organismsDiffer>
    <experiments>2</experiments>
</comment>
<comment type="subcellular location">
    <subcellularLocation>
        <location evidence="10">Endoplasmic reticulum membrane</location>
        <topology evidence="6">Multi-pass membrane protein</topology>
    </subcellularLocation>
</comment>
<comment type="similarity">
    <text evidence="10">Belongs to the DAD/OST2 family.</text>
</comment>
<comment type="sequence caution" evidence="10">
    <conflict type="erroneous initiation">
        <sequence resource="EMBL-CDS" id="CAA64024"/>
    </conflict>
</comment>
<comment type="sequence caution" evidence="10">
    <conflict type="erroneous initiation">
        <sequence resource="EMBL-CDS" id="CAA99300"/>
    </conflict>
</comment>
<accession>P46964</accession>
<accession>D6W2G3</accession>
<proteinExistence type="evidence at protein level"/>
<feature type="initiator methionine" description="Removed" evidence="7">
    <location>
        <position position="1"/>
    </location>
</feature>
<feature type="chain" id="PRO_0000124032" description="Dolichyl-diphosphooligosaccharide--protein glycosyltransferase subunit OST2">
    <location>
        <begin position="2"/>
        <end position="130"/>
    </location>
</feature>
<feature type="topological domain" description="Cytoplasmic" evidence="11">
    <location>
        <begin position="2"/>
        <end position="45"/>
    </location>
</feature>
<feature type="transmembrane region" description="Helical" evidence="6">
    <location>
        <begin position="46"/>
        <end position="66"/>
    </location>
</feature>
<feature type="topological domain" description="Lumenal" evidence="11">
    <location>
        <begin position="67"/>
        <end position="71"/>
    </location>
</feature>
<feature type="transmembrane region" description="Helical" evidence="6">
    <location>
        <begin position="72"/>
        <end position="92"/>
    </location>
</feature>
<feature type="topological domain" description="Cytoplasmic" evidence="11">
    <location>
        <begin position="93"/>
        <end position="109"/>
    </location>
</feature>
<feature type="transmembrane region" description="Helical" evidence="6">
    <location>
        <begin position="110"/>
        <end position="130"/>
    </location>
</feature>
<feature type="mutagenesis site" description="In OST2-3; ts; reduced activity.">
    <original>S</original>
    <variation>P</variation>
    <location>
        <position position="16"/>
    </location>
</feature>
<feature type="mutagenesis site" description="In OST2-3; ts; reduced activity.">
    <original>E</original>
    <variation>G</variation>
    <location>
        <position position="25"/>
    </location>
</feature>
<feature type="mutagenesis site" description="In OST2-1; ts; reduced activity.">
    <original>K</original>
    <variation>M</variation>
    <location>
        <position position="31"/>
    </location>
</feature>
<feature type="mutagenesis site" description="In OST2-2; ts; reduced activity.">
    <original>D</original>
    <variation>V</variation>
    <location>
        <position position="48"/>
    </location>
</feature>
<feature type="mutagenesis site" description="In OST2-3; ts; reduced activity.">
    <original>Q</original>
    <variation>R</variation>
    <location>
        <position position="61"/>
    </location>
</feature>
<feature type="mutagenesis site" description="In OST2-1; ts; reduced activity.">
    <original>C</original>
    <variation>S</variation>
    <location>
        <position position="62"/>
    </location>
</feature>
<feature type="mutagenesis site" description="In OST2-6; ts; reduced activity.">
    <original>R</original>
    <variation>C</variation>
    <location>
        <position position="69"/>
    </location>
</feature>
<feature type="mutagenesis site" description="In OST2-1; ts; reduced activity.">
    <original>G</original>
    <variation>E</variation>
    <location>
        <position position="80"/>
    </location>
</feature>
<feature type="mutagenesis site" description="In OST2-4; ts; reduced activity.">
    <original>G</original>
    <variation>R</variation>
    <location>
        <position position="86"/>
    </location>
</feature>
<feature type="mutagenesis site" description="In OST2-6; ts; reduced activity.">
    <original>A</original>
    <variation>S</variation>
    <location>
        <position position="112"/>
    </location>
</feature>
<feature type="mutagenesis site" description="In OST2-6; ts; reduced activity.">
    <original>E</original>
    <variation>K</variation>
    <location>
        <position position="113"/>
    </location>
</feature>
<feature type="mutagenesis site" description="In OST2-5; ts; reduced activity.">
    <original>E</original>
    <variation>V</variation>
    <location>
        <position position="113"/>
    </location>
</feature>
<feature type="mutagenesis site" description="In OST2-2; ts; reduced activity.">
    <original>L</original>
    <variation>S</variation>
    <location>
        <position position="119"/>
    </location>
</feature>
<feature type="mutagenesis site" description="In OST2-2; ts; reduced activity.">
    <original>F</original>
    <variation>L</variation>
    <location>
        <position position="123"/>
    </location>
</feature>
<feature type="mutagenesis site" description="In OST2-1; ts; reduced activity.">
    <original>H</original>
    <variation>Y</variation>
    <location>
        <position position="127"/>
    </location>
</feature>
<feature type="helix" evidence="14">
    <location>
        <begin position="23"/>
        <end position="40"/>
    </location>
</feature>
<feature type="helix" evidence="14">
    <location>
        <begin position="42"/>
        <end position="68"/>
    </location>
</feature>
<feature type="helix" evidence="14">
    <location>
        <begin position="74"/>
        <end position="99"/>
    </location>
</feature>
<feature type="strand" evidence="13">
    <location>
        <begin position="103"/>
        <end position="105"/>
    </location>
</feature>
<feature type="helix" evidence="14">
    <location>
        <begin position="107"/>
        <end position="128"/>
    </location>
</feature>
<keyword id="KW-0002">3D-structure</keyword>
<keyword id="KW-0903">Direct protein sequencing</keyword>
<keyword id="KW-0256">Endoplasmic reticulum</keyword>
<keyword id="KW-0472">Membrane</keyword>
<keyword id="KW-1185">Reference proteome</keyword>
<keyword id="KW-0812">Transmembrane</keyword>
<keyword id="KW-1133">Transmembrane helix</keyword>
<reference key="1">
    <citation type="journal article" date="1995" name="J. Cell Biol.">
        <title>The essential OST2 gene encodes the 16-kD subunit of the yeast oligosaccharyltransferase, a highly conserved protein expressed in diverse eukaryotic organisms.</title>
        <authorList>
            <person name="Silberstein S."/>
            <person name="Collins P.G."/>
            <person name="Kelleher D.J."/>
            <person name="Gilmore R."/>
        </authorList>
    </citation>
    <scope>NUCLEOTIDE SEQUENCE [GENOMIC DNA]</scope>
    <scope>PROTEIN SEQUENCE OF 2-28 AND 33-40</scope>
    <scope>MUTAGENESIS OF SER-16; GLU-25; LYS-31; ASP-48; GLN-61; CYS-62; ARG-69; GLY-80; GLY-86; ALA-112; GLU-113; LEU-119; PHE-123 AND HIS-127</scope>
</reference>
<reference key="2">
    <citation type="journal article" date="1997" name="Yeast">
        <title>DNA sequencing and analysis of 130 kb from yeast chromosome XV.</title>
        <authorList>
            <person name="Voss H."/>
            <person name="Benes V."/>
            <person name="Andrade M.A."/>
            <person name="Valencia A."/>
            <person name="Rechmann S."/>
            <person name="Teodoru C."/>
            <person name="Schwager C."/>
            <person name="Paces V."/>
            <person name="Sander C."/>
            <person name="Ansorge W."/>
        </authorList>
    </citation>
    <scope>NUCLEOTIDE SEQUENCE [GENOMIC DNA]</scope>
</reference>
<reference key="3">
    <citation type="journal article" date="1997" name="Nature">
        <title>The nucleotide sequence of Saccharomyces cerevisiae chromosome XV.</title>
        <authorList>
            <person name="Dujon B."/>
            <person name="Albermann K."/>
            <person name="Aldea M."/>
            <person name="Alexandraki D."/>
            <person name="Ansorge W."/>
            <person name="Arino J."/>
            <person name="Benes V."/>
            <person name="Bohn C."/>
            <person name="Bolotin-Fukuhara M."/>
            <person name="Bordonne R."/>
            <person name="Boyer J."/>
            <person name="Camasses A."/>
            <person name="Casamayor A."/>
            <person name="Casas C."/>
            <person name="Cheret G."/>
            <person name="Cziepluch C."/>
            <person name="Daignan-Fornier B."/>
            <person name="Dang V.-D."/>
            <person name="de Haan M."/>
            <person name="Delius H."/>
            <person name="Durand P."/>
            <person name="Fairhead C."/>
            <person name="Feldmann H."/>
            <person name="Gaillon L."/>
            <person name="Galisson F."/>
            <person name="Gamo F.-J."/>
            <person name="Gancedo C."/>
            <person name="Goffeau A."/>
            <person name="Goulding S.E."/>
            <person name="Grivell L.A."/>
            <person name="Habbig B."/>
            <person name="Hand N.J."/>
            <person name="Hani J."/>
            <person name="Hattenhorst U."/>
            <person name="Hebling U."/>
            <person name="Hernando Y."/>
            <person name="Herrero E."/>
            <person name="Heumann K."/>
            <person name="Hiesel R."/>
            <person name="Hilger F."/>
            <person name="Hofmann B."/>
            <person name="Hollenberg C.P."/>
            <person name="Hughes B."/>
            <person name="Jauniaux J.-C."/>
            <person name="Kalogeropoulos A."/>
            <person name="Katsoulou C."/>
            <person name="Kordes E."/>
            <person name="Lafuente M.J."/>
            <person name="Landt O."/>
            <person name="Louis E.J."/>
            <person name="Maarse A.C."/>
            <person name="Madania A."/>
            <person name="Mannhaupt G."/>
            <person name="Marck C."/>
            <person name="Martin R.P."/>
            <person name="Mewes H.-W."/>
            <person name="Michaux G."/>
            <person name="Paces V."/>
            <person name="Parle-McDermott A.G."/>
            <person name="Pearson B.M."/>
            <person name="Perrin A."/>
            <person name="Pettersson B."/>
            <person name="Poch O."/>
            <person name="Pohl T.M."/>
            <person name="Poirey R."/>
            <person name="Portetelle D."/>
            <person name="Pujol A."/>
            <person name="Purnelle B."/>
            <person name="Ramezani Rad M."/>
            <person name="Rechmann S."/>
            <person name="Schwager C."/>
            <person name="Schweizer M."/>
            <person name="Sor F."/>
            <person name="Sterky F."/>
            <person name="Tarassov I.A."/>
            <person name="Teodoru C."/>
            <person name="Tettelin H."/>
            <person name="Thierry A."/>
            <person name="Tobiasch E."/>
            <person name="Tzermia M."/>
            <person name="Uhlen M."/>
            <person name="Unseld M."/>
            <person name="Valens M."/>
            <person name="Vandenbol M."/>
            <person name="Vetter I."/>
            <person name="Vlcek C."/>
            <person name="Voet M."/>
            <person name="Volckaert G."/>
            <person name="Voss H."/>
            <person name="Wambutt R."/>
            <person name="Wedler H."/>
            <person name="Wiemann S."/>
            <person name="Winsor B."/>
            <person name="Wolfe K.H."/>
            <person name="Zollner A."/>
            <person name="Zumstein E."/>
            <person name="Kleine K."/>
        </authorList>
    </citation>
    <scope>NUCLEOTIDE SEQUENCE [LARGE SCALE GENOMIC DNA]</scope>
    <source>
        <strain>ATCC 204508 / S288c</strain>
    </source>
</reference>
<reference key="4">
    <citation type="journal article" date="2014" name="G3 (Bethesda)">
        <title>The reference genome sequence of Saccharomyces cerevisiae: Then and now.</title>
        <authorList>
            <person name="Engel S.R."/>
            <person name="Dietrich F.S."/>
            <person name="Fisk D.G."/>
            <person name="Binkley G."/>
            <person name="Balakrishnan R."/>
            <person name="Costanzo M.C."/>
            <person name="Dwight S.S."/>
            <person name="Hitz B.C."/>
            <person name="Karra K."/>
            <person name="Nash R.S."/>
            <person name="Weng S."/>
            <person name="Wong E.D."/>
            <person name="Lloyd P."/>
            <person name="Skrzypek M.S."/>
            <person name="Miyasato S.R."/>
            <person name="Simison M."/>
            <person name="Cherry J.M."/>
        </authorList>
    </citation>
    <scope>GENOME REANNOTATION</scope>
    <source>
        <strain>ATCC 204508 / S288c</strain>
    </source>
</reference>
<reference key="5">
    <citation type="journal article" date="1994" name="J. Biol. Chem.">
        <title>The Saccharomyces cerevisiae oligosaccharyltransferase is a protein complex composed of Wbp1p, Swp1p, and four additional polypeptides.</title>
        <authorList>
            <person name="Kelleher D.J."/>
            <person name="Gilmore R."/>
        </authorList>
    </citation>
    <scope>IDENTIFICATION IN THE OLIGOSACCHARYL TRANSFERASE COMPLEX</scope>
</reference>
<reference key="6">
    <citation type="journal article" date="1997" name="J. Biol. Chem.">
        <title>The highly conserved Stt3 protein is a subunit of the yeast oligosaccharyltransferase and forms a subcomplex with Ost3p and Ost4p.</title>
        <authorList>
            <person name="Karaoglu D."/>
            <person name="Kelleher D.J."/>
            <person name="Gilmore R."/>
        </authorList>
    </citation>
    <scope>IDENTIFICATION IN THE OLIGOSACCHARYL TRANSFERASE COMPLEX</scope>
</reference>
<reference key="7">
    <citation type="journal article" date="1999" name="Biochim. Biophys. Acta">
        <title>The oligosaccharyltransferase complex from yeast.</title>
        <authorList>
            <person name="Knauer R."/>
            <person name="Lehle L."/>
        </authorList>
    </citation>
    <scope>REVIEW ON OLIGOSACCHARYL TRANSFERASE</scope>
</reference>
<reference key="8">
    <citation type="journal article" date="2001" name="Biochemistry">
        <title>Allosteric regulation provides a molecular mechanism for preferential utilization of the fully assembled dolichol-linked oligosaccharide by the yeast oligosaccharyltransferase.</title>
        <authorList>
            <person name="Karaoglu D."/>
            <person name="Kelleher D.J."/>
            <person name="Gilmore R."/>
        </authorList>
    </citation>
    <scope>FUNCTION</scope>
</reference>
<reference key="9">
    <citation type="journal article" date="2005" name="FEBS Lett.">
        <title>Yeast oligosaccharyltransferase consists of two functionally distinct sub-complexes, specified by either the Ost3p or Ost6p subunit.</title>
        <authorList>
            <person name="Schwarz M."/>
            <person name="Knauer R."/>
            <person name="Lehle L."/>
        </authorList>
    </citation>
    <scope>COMPOSITION OF OLIGOSACCHARYL TRANSFERASE COMPLEXES</scope>
</reference>
<reference key="10">
    <citation type="journal article" date="2005" name="Glycobiology">
        <title>The 3.4-kDa Ost4 protein is required for the assembly of two distinct oligosaccharyltransferase complexes in yeast.</title>
        <authorList>
            <person name="Spirig U."/>
            <person name="Bodmer D."/>
            <person name="Wacker M."/>
            <person name="Burda P."/>
            <person name="Aebi M."/>
        </authorList>
    </citation>
    <scope>COMPOSITION OF OLIGOSACCHARYL TRANSFERASE COMPLEXES</scope>
</reference>
<reference key="11">
    <citation type="journal article" date="2005" name="Glycobiology">
        <title>Two oligosaccharyl transferase complexes exist in yeast and associate with two different translocons.</title>
        <authorList>
            <person name="Yan A."/>
            <person name="Lennarz W.J."/>
        </authorList>
    </citation>
    <scope>COMPOSITION OF OLIGOSACCHARYL TRANSFERASE COMPLEXES</scope>
</reference>
<reference key="12">
    <citation type="journal article" date="2005" name="J. Biol. Chem.">
        <title>Subunits of the translocon interact with components of the oligosaccharyl transferase complex.</title>
        <authorList>
            <person name="Chavan M."/>
            <person name="Yan A."/>
            <person name="Lennarz W.J."/>
        </authorList>
    </citation>
    <scope>INTERACTION WITH SEC61 AND SSS1</scope>
</reference>
<reference key="13">
    <citation type="journal article" date="2005" name="Proc. Natl. Acad. Sci. U.S.A.">
        <title>Studies of yeast oligosaccharyl transferase subunits using the split-ubiquitin system: topological features and in vivo interactions.</title>
        <authorList>
            <person name="Yan A."/>
            <person name="Wu E."/>
            <person name="Lennarz W.J."/>
        </authorList>
    </citation>
    <scope>TOPOLOGY</scope>
    <scope>INTERACTION WITH OST1; OST3; OST4; OST5; OST6; WBP1 AND SWP1</scope>
</reference>
<reference key="14">
    <citation type="journal article" date="2006" name="Proc. Natl. Acad. Sci. U.S.A.">
        <title>A global topology map of the Saccharomyces cerevisiae membrane proteome.</title>
        <authorList>
            <person name="Kim H."/>
            <person name="Melen K."/>
            <person name="Oesterberg M."/>
            <person name="von Heijne G."/>
        </authorList>
    </citation>
    <scope>TOPOLOGY [LARGE SCALE ANALYSIS]</scope>
    <source>
        <strain>ATCC 208353 / W303-1A</strain>
    </source>
</reference>
<reference key="15">
    <citation type="journal article" date="2018" name="Nature">
        <title>The atomic structure of a eukaryotic oligosaccharyltransferase complex.</title>
        <authorList>
            <person name="Bai L."/>
            <person name="Wang T."/>
            <person name="Zhao G."/>
            <person name="Kovach A."/>
            <person name="Li H."/>
        </authorList>
    </citation>
    <scope>STRUCTURE BY ELECTRON MICROSCOPY (3.50 ANGSTROMS) OF 1-130</scope>
</reference>
<reference key="16">
    <citation type="journal article" date="2018" name="Science">
        <title>Structure of the yeast oligosaccharyltransferase complex gives insight into eukaryotic N-glycosylation.</title>
        <authorList>
            <person name="Wild R."/>
            <person name="Kowal J."/>
            <person name="Eyring J."/>
            <person name="Ngwa E.M."/>
            <person name="Aebi M."/>
            <person name="Locher K.P."/>
        </authorList>
    </citation>
    <scope>STRUCTURE BY ELECTRON MICROSCOPY (3.30 ANGSTROMS) OF 1-130</scope>
</reference>
<protein>
    <recommendedName>
        <fullName>Dolichyl-diphosphooligosaccharide--protein glycosyltransferase subunit OST2</fullName>
        <shortName>Oligosaccharyl transferase subunit OST2</shortName>
    </recommendedName>
    <alternativeName>
        <fullName>Oligosaccharyl transferase 16 kDa subunit</fullName>
    </alternativeName>
    <alternativeName>
        <fullName>Oligosaccharyl transferase subunit epsilon</fullName>
    </alternativeName>
</protein>